<accession>Q5FG88</accession>
<reference key="1">
    <citation type="journal article" date="2006" name="J. Bacteriol.">
        <title>Comparative genomic analysis of three strains of Ehrlichia ruminantium reveals an active process of genome size plasticity.</title>
        <authorList>
            <person name="Frutos R."/>
            <person name="Viari A."/>
            <person name="Ferraz C."/>
            <person name="Morgat A."/>
            <person name="Eychenie S."/>
            <person name="Kandassamy Y."/>
            <person name="Chantal I."/>
            <person name="Bensaid A."/>
            <person name="Coissac E."/>
            <person name="Vachiery N."/>
            <person name="Demaille J."/>
            <person name="Martinez D."/>
        </authorList>
    </citation>
    <scope>NUCLEOTIDE SEQUENCE [LARGE SCALE GENOMIC DNA]</scope>
    <source>
        <strain>Gardel</strain>
    </source>
</reference>
<keyword id="KW-0963">Cytoplasm</keyword>
<keyword id="KW-0255">Endonuclease</keyword>
<keyword id="KW-0378">Hydrolase</keyword>
<keyword id="KW-0460">Magnesium</keyword>
<keyword id="KW-0479">Metal-binding</keyword>
<keyword id="KW-0540">Nuclease</keyword>
<comment type="function">
    <text evidence="1">Endonuclease that specifically degrades the RNA of RNA-DNA hybrids.</text>
</comment>
<comment type="catalytic activity">
    <reaction evidence="1">
        <text>Endonucleolytic cleavage to 5'-phosphomonoester.</text>
        <dbReference type="EC" id="3.1.26.4"/>
    </reaction>
</comment>
<comment type="cofactor">
    <cofactor evidence="1">
        <name>Mg(2+)</name>
        <dbReference type="ChEBI" id="CHEBI:18420"/>
    </cofactor>
    <text evidence="1">Binds 1 Mg(2+) ion per subunit. May bind a second metal ion at a regulatory site, or after substrate binding.</text>
</comment>
<comment type="subunit">
    <text evidence="1">Monomer.</text>
</comment>
<comment type="subcellular location">
    <subcellularLocation>
        <location evidence="1">Cytoplasm</location>
    </subcellularLocation>
</comment>
<comment type="similarity">
    <text evidence="1">Belongs to the RNase H family.</text>
</comment>
<comment type="sequence caution" evidence="3">
    <conflict type="erroneous initiation">
        <sequence resource="EMBL-CDS" id="CAI28208"/>
    </conflict>
</comment>
<protein>
    <recommendedName>
        <fullName evidence="1">Ribonuclease H</fullName>
        <shortName evidence="1">RNase H</shortName>
        <ecNumber evidence="1">3.1.26.4</ecNumber>
    </recommendedName>
</protein>
<evidence type="ECO:0000255" key="1">
    <source>
        <dbReference type="HAMAP-Rule" id="MF_00042"/>
    </source>
</evidence>
<evidence type="ECO:0000255" key="2">
    <source>
        <dbReference type="PROSITE-ProRule" id="PRU00408"/>
    </source>
</evidence>
<evidence type="ECO:0000305" key="3"/>
<proteinExistence type="inferred from homology"/>
<sequence>MKDELNKVVVYTDGACSGNPGPGGWGAVLLFDNGEKTICGGHPNTTNNRMELTAVVQALKFLDVTYVIDLYTDSVYVKSGITSWIKKWKINGWRTADKLPVKNLELWLELDKIVKYHKITWYWVKAHSGNLYNEKADMLARSQIVK</sequence>
<organism>
    <name type="scientific">Ehrlichia ruminantium (strain Gardel)</name>
    <dbReference type="NCBI Taxonomy" id="302409"/>
    <lineage>
        <taxon>Bacteria</taxon>
        <taxon>Pseudomonadati</taxon>
        <taxon>Pseudomonadota</taxon>
        <taxon>Alphaproteobacteria</taxon>
        <taxon>Rickettsiales</taxon>
        <taxon>Anaplasmataceae</taxon>
        <taxon>Ehrlichia</taxon>
    </lineage>
</organism>
<dbReference type="EC" id="3.1.26.4" evidence="1"/>
<dbReference type="EMBL" id="CR925677">
    <property type="protein sequence ID" value="CAI28208.1"/>
    <property type="status" value="ALT_INIT"/>
    <property type="molecule type" value="Genomic_DNA"/>
</dbReference>
<dbReference type="RefSeq" id="WP_044157074.1">
    <property type="nucleotide sequence ID" value="NC_006831.1"/>
</dbReference>
<dbReference type="SMR" id="Q5FG88"/>
<dbReference type="KEGG" id="erg:ERGA_CDS_07560"/>
<dbReference type="HOGENOM" id="CLU_030894_6_0_5"/>
<dbReference type="OrthoDB" id="7845843at2"/>
<dbReference type="Proteomes" id="UP000000533">
    <property type="component" value="Chromosome"/>
</dbReference>
<dbReference type="GO" id="GO:0005737">
    <property type="term" value="C:cytoplasm"/>
    <property type="evidence" value="ECO:0007669"/>
    <property type="project" value="UniProtKB-SubCell"/>
</dbReference>
<dbReference type="GO" id="GO:0000287">
    <property type="term" value="F:magnesium ion binding"/>
    <property type="evidence" value="ECO:0007669"/>
    <property type="project" value="UniProtKB-UniRule"/>
</dbReference>
<dbReference type="GO" id="GO:0003676">
    <property type="term" value="F:nucleic acid binding"/>
    <property type="evidence" value="ECO:0007669"/>
    <property type="project" value="InterPro"/>
</dbReference>
<dbReference type="GO" id="GO:0004523">
    <property type="term" value="F:RNA-DNA hybrid ribonuclease activity"/>
    <property type="evidence" value="ECO:0007669"/>
    <property type="project" value="UniProtKB-UniRule"/>
</dbReference>
<dbReference type="GO" id="GO:0043137">
    <property type="term" value="P:DNA replication, removal of RNA primer"/>
    <property type="evidence" value="ECO:0007669"/>
    <property type="project" value="TreeGrafter"/>
</dbReference>
<dbReference type="CDD" id="cd09278">
    <property type="entry name" value="RNase_HI_prokaryote_like"/>
    <property type="match status" value="1"/>
</dbReference>
<dbReference type="FunFam" id="3.30.420.10:FF:000089">
    <property type="entry name" value="Ribonuclease H"/>
    <property type="match status" value="1"/>
</dbReference>
<dbReference type="Gene3D" id="3.30.420.10">
    <property type="entry name" value="Ribonuclease H-like superfamily/Ribonuclease H"/>
    <property type="match status" value="1"/>
</dbReference>
<dbReference type="HAMAP" id="MF_00042">
    <property type="entry name" value="RNase_H"/>
    <property type="match status" value="1"/>
</dbReference>
<dbReference type="InterPro" id="IPR050092">
    <property type="entry name" value="RNase_H"/>
</dbReference>
<dbReference type="InterPro" id="IPR012337">
    <property type="entry name" value="RNaseH-like_sf"/>
</dbReference>
<dbReference type="InterPro" id="IPR002156">
    <property type="entry name" value="RNaseH_domain"/>
</dbReference>
<dbReference type="InterPro" id="IPR036397">
    <property type="entry name" value="RNaseH_sf"/>
</dbReference>
<dbReference type="InterPro" id="IPR022892">
    <property type="entry name" value="RNaseHI"/>
</dbReference>
<dbReference type="NCBIfam" id="NF001236">
    <property type="entry name" value="PRK00203.1"/>
    <property type="match status" value="1"/>
</dbReference>
<dbReference type="PANTHER" id="PTHR10642">
    <property type="entry name" value="RIBONUCLEASE H1"/>
    <property type="match status" value="1"/>
</dbReference>
<dbReference type="PANTHER" id="PTHR10642:SF26">
    <property type="entry name" value="RIBONUCLEASE H1"/>
    <property type="match status" value="1"/>
</dbReference>
<dbReference type="Pfam" id="PF00075">
    <property type="entry name" value="RNase_H"/>
    <property type="match status" value="1"/>
</dbReference>
<dbReference type="SUPFAM" id="SSF53098">
    <property type="entry name" value="Ribonuclease H-like"/>
    <property type="match status" value="1"/>
</dbReference>
<dbReference type="PROSITE" id="PS50879">
    <property type="entry name" value="RNASE_H_1"/>
    <property type="match status" value="1"/>
</dbReference>
<name>RNH_EHRRG</name>
<gene>
    <name evidence="1" type="primary">rnhA</name>
    <name type="ordered locus">ERGA_CDS_07560</name>
</gene>
<feature type="chain" id="PRO_0000332596" description="Ribonuclease H">
    <location>
        <begin position="1"/>
        <end position="146"/>
    </location>
</feature>
<feature type="domain" description="RNase H type-1" evidence="2">
    <location>
        <begin position="4"/>
        <end position="145"/>
    </location>
</feature>
<feature type="binding site" evidence="1">
    <location>
        <position position="13"/>
    </location>
    <ligand>
        <name>Mg(2+)</name>
        <dbReference type="ChEBI" id="CHEBI:18420"/>
        <label>1</label>
    </ligand>
</feature>
<feature type="binding site" evidence="1">
    <location>
        <position position="13"/>
    </location>
    <ligand>
        <name>Mg(2+)</name>
        <dbReference type="ChEBI" id="CHEBI:18420"/>
        <label>2</label>
    </ligand>
</feature>
<feature type="binding site" evidence="1">
    <location>
        <position position="51"/>
    </location>
    <ligand>
        <name>Mg(2+)</name>
        <dbReference type="ChEBI" id="CHEBI:18420"/>
        <label>1</label>
    </ligand>
</feature>
<feature type="binding site" evidence="1">
    <location>
        <position position="73"/>
    </location>
    <ligand>
        <name>Mg(2+)</name>
        <dbReference type="ChEBI" id="CHEBI:18420"/>
        <label>1</label>
    </ligand>
</feature>
<feature type="binding site" evidence="1">
    <location>
        <position position="137"/>
    </location>
    <ligand>
        <name>Mg(2+)</name>
        <dbReference type="ChEBI" id="CHEBI:18420"/>
        <label>2</label>
    </ligand>
</feature>